<protein>
    <recommendedName>
        <fullName evidence="1">Serine--tRNA ligase</fullName>
        <ecNumber evidence="1">6.1.1.11</ecNumber>
    </recommendedName>
    <alternativeName>
        <fullName evidence="1">Seryl-tRNA synthetase</fullName>
        <shortName evidence="1">SerRS</shortName>
    </alternativeName>
    <alternativeName>
        <fullName evidence="1">Seryl-tRNA(Ser/Sec) synthetase</fullName>
    </alternativeName>
</protein>
<reference key="1">
    <citation type="journal article" date="2008" name="Proc. Natl. Acad. Sci. U.S.A.">
        <title>A korarchaeal genome reveals new insights into the evolution of the Archaea.</title>
        <authorList>
            <person name="Elkins J.G."/>
            <person name="Podar M."/>
            <person name="Graham D.E."/>
            <person name="Makarova K.S."/>
            <person name="Wolf Y."/>
            <person name="Randau L."/>
            <person name="Hedlund B.P."/>
            <person name="Brochier-Armanet C."/>
            <person name="Kunin V."/>
            <person name="Anderson I."/>
            <person name="Lapidus A."/>
            <person name="Goltsman E."/>
            <person name="Barry K."/>
            <person name="Koonin E.V."/>
            <person name="Hugenholtz P."/>
            <person name="Kyrpides N."/>
            <person name="Wanner G."/>
            <person name="Richardson P."/>
            <person name="Keller M."/>
            <person name="Stetter K.O."/>
        </authorList>
    </citation>
    <scope>NUCLEOTIDE SEQUENCE [LARGE SCALE GENOMIC DNA]</scope>
    <source>
        <strain>OPF8</strain>
    </source>
</reference>
<name>SYS_KORCO</name>
<gene>
    <name evidence="1" type="primary">serS</name>
    <name type="ordered locus">Kcr_0943</name>
</gene>
<dbReference type="EC" id="6.1.1.11" evidence="1"/>
<dbReference type="EMBL" id="CP000968">
    <property type="protein sequence ID" value="ACB07689.1"/>
    <property type="molecule type" value="Genomic_DNA"/>
</dbReference>
<dbReference type="RefSeq" id="WP_012309586.1">
    <property type="nucleotide sequence ID" value="NC_010482.1"/>
</dbReference>
<dbReference type="SMR" id="B1L5G0"/>
<dbReference type="FunCoup" id="B1L5G0">
    <property type="interactions" value="199"/>
</dbReference>
<dbReference type="STRING" id="374847.Kcr_0943"/>
<dbReference type="EnsemblBacteria" id="ACB07689">
    <property type="protein sequence ID" value="ACB07689"/>
    <property type="gene ID" value="Kcr_0943"/>
</dbReference>
<dbReference type="GeneID" id="6094220"/>
<dbReference type="KEGG" id="kcr:Kcr_0943"/>
<dbReference type="eggNOG" id="arCOG00403">
    <property type="taxonomic scope" value="Archaea"/>
</dbReference>
<dbReference type="HOGENOM" id="CLU_023797_0_1_2"/>
<dbReference type="InParanoid" id="B1L5G0"/>
<dbReference type="OrthoDB" id="35932at2157"/>
<dbReference type="PhylomeDB" id="B1L5G0"/>
<dbReference type="UniPathway" id="UPA00906">
    <property type="reaction ID" value="UER00895"/>
</dbReference>
<dbReference type="Proteomes" id="UP000001686">
    <property type="component" value="Chromosome"/>
</dbReference>
<dbReference type="GO" id="GO:0005829">
    <property type="term" value="C:cytosol"/>
    <property type="evidence" value="ECO:0000318"/>
    <property type="project" value="GO_Central"/>
</dbReference>
<dbReference type="GO" id="GO:0005524">
    <property type="term" value="F:ATP binding"/>
    <property type="evidence" value="ECO:0007669"/>
    <property type="project" value="UniProtKB-UniRule"/>
</dbReference>
<dbReference type="GO" id="GO:0004828">
    <property type="term" value="F:serine-tRNA ligase activity"/>
    <property type="evidence" value="ECO:0000318"/>
    <property type="project" value="GO_Central"/>
</dbReference>
<dbReference type="GO" id="GO:0000049">
    <property type="term" value="F:tRNA binding"/>
    <property type="evidence" value="ECO:0000318"/>
    <property type="project" value="GO_Central"/>
</dbReference>
<dbReference type="GO" id="GO:0016260">
    <property type="term" value="P:selenocysteine biosynthetic process"/>
    <property type="evidence" value="ECO:0007669"/>
    <property type="project" value="UniProtKB-UniRule"/>
</dbReference>
<dbReference type="GO" id="GO:0006434">
    <property type="term" value="P:seryl-tRNA aminoacylation"/>
    <property type="evidence" value="ECO:0000318"/>
    <property type="project" value="GO_Central"/>
</dbReference>
<dbReference type="CDD" id="cd00770">
    <property type="entry name" value="SerRS_core"/>
    <property type="match status" value="1"/>
</dbReference>
<dbReference type="FunFam" id="3.30.930.10:FF:000048">
    <property type="entry name" value="Serine--tRNA ligase"/>
    <property type="match status" value="1"/>
</dbReference>
<dbReference type="Gene3D" id="3.30.930.10">
    <property type="entry name" value="Bira Bifunctional Protein, Domain 2"/>
    <property type="match status" value="1"/>
</dbReference>
<dbReference type="Gene3D" id="1.10.287.40">
    <property type="entry name" value="Serine-tRNA synthetase, tRNA binding domain"/>
    <property type="match status" value="1"/>
</dbReference>
<dbReference type="HAMAP" id="MF_00176">
    <property type="entry name" value="Ser_tRNA_synth_type1"/>
    <property type="match status" value="1"/>
</dbReference>
<dbReference type="InterPro" id="IPR002314">
    <property type="entry name" value="aa-tRNA-synt_IIb"/>
</dbReference>
<dbReference type="InterPro" id="IPR006195">
    <property type="entry name" value="aa-tRNA-synth_II"/>
</dbReference>
<dbReference type="InterPro" id="IPR045864">
    <property type="entry name" value="aa-tRNA-synth_II/BPL/LPL"/>
</dbReference>
<dbReference type="InterPro" id="IPR002317">
    <property type="entry name" value="Ser-tRNA-ligase_type_1"/>
</dbReference>
<dbReference type="InterPro" id="IPR015866">
    <property type="entry name" value="Ser-tRNA-synth_1_N"/>
</dbReference>
<dbReference type="InterPro" id="IPR042103">
    <property type="entry name" value="SerRS_1_N_sf"/>
</dbReference>
<dbReference type="InterPro" id="IPR033729">
    <property type="entry name" value="SerRS_core"/>
</dbReference>
<dbReference type="InterPro" id="IPR010978">
    <property type="entry name" value="tRNA-bd_arm"/>
</dbReference>
<dbReference type="NCBIfam" id="TIGR00414">
    <property type="entry name" value="serS"/>
    <property type="match status" value="1"/>
</dbReference>
<dbReference type="PANTHER" id="PTHR11778">
    <property type="entry name" value="SERYL-TRNA SYNTHETASE"/>
    <property type="match status" value="1"/>
</dbReference>
<dbReference type="Pfam" id="PF02403">
    <property type="entry name" value="Seryl_tRNA_N"/>
    <property type="match status" value="1"/>
</dbReference>
<dbReference type="Pfam" id="PF00587">
    <property type="entry name" value="tRNA-synt_2b"/>
    <property type="match status" value="1"/>
</dbReference>
<dbReference type="PIRSF" id="PIRSF001529">
    <property type="entry name" value="Ser-tRNA-synth_IIa"/>
    <property type="match status" value="1"/>
</dbReference>
<dbReference type="PRINTS" id="PR00981">
    <property type="entry name" value="TRNASYNTHSER"/>
</dbReference>
<dbReference type="SUPFAM" id="SSF55681">
    <property type="entry name" value="Class II aaRS and biotin synthetases"/>
    <property type="match status" value="1"/>
</dbReference>
<dbReference type="SUPFAM" id="SSF46589">
    <property type="entry name" value="tRNA-binding arm"/>
    <property type="match status" value="1"/>
</dbReference>
<dbReference type="PROSITE" id="PS50862">
    <property type="entry name" value="AA_TRNA_LIGASE_II"/>
    <property type="match status" value="1"/>
</dbReference>
<evidence type="ECO:0000255" key="1">
    <source>
        <dbReference type="HAMAP-Rule" id="MF_00176"/>
    </source>
</evidence>
<proteinExistence type="inferred from homology"/>
<accession>B1L5G0</accession>
<feature type="chain" id="PRO_1000098082" description="Serine--tRNA ligase">
    <location>
        <begin position="1"/>
        <end position="456"/>
    </location>
</feature>
<feature type="binding site" evidence="1">
    <location>
        <begin position="252"/>
        <end position="254"/>
    </location>
    <ligand>
        <name>L-serine</name>
        <dbReference type="ChEBI" id="CHEBI:33384"/>
    </ligand>
</feature>
<feature type="binding site" evidence="1">
    <location>
        <begin position="283"/>
        <end position="285"/>
    </location>
    <ligand>
        <name>ATP</name>
        <dbReference type="ChEBI" id="CHEBI:30616"/>
    </ligand>
</feature>
<feature type="binding site" evidence="1">
    <location>
        <position position="299"/>
    </location>
    <ligand>
        <name>ATP</name>
        <dbReference type="ChEBI" id="CHEBI:30616"/>
    </ligand>
</feature>
<feature type="binding site" evidence="1">
    <location>
        <position position="306"/>
    </location>
    <ligand>
        <name>L-serine</name>
        <dbReference type="ChEBI" id="CHEBI:33384"/>
    </ligand>
</feature>
<feature type="binding site" evidence="1">
    <location>
        <begin position="370"/>
        <end position="373"/>
    </location>
    <ligand>
        <name>ATP</name>
        <dbReference type="ChEBI" id="CHEBI:30616"/>
    </ligand>
</feature>
<feature type="binding site" evidence="1">
    <location>
        <position position="404"/>
    </location>
    <ligand>
        <name>L-serine</name>
        <dbReference type="ChEBI" id="CHEBI:33384"/>
    </ligand>
</feature>
<organism>
    <name type="scientific">Korarchaeum cryptofilum (strain OPF8)</name>
    <dbReference type="NCBI Taxonomy" id="374847"/>
    <lineage>
        <taxon>Archaea</taxon>
        <taxon>Thermoproteota</taxon>
        <taxon>Candidatus Korarchaeia</taxon>
        <taxon>Candidatus Korarchaeales</taxon>
        <taxon>Candidatus Korarchaeaceae</taxon>
        <taxon>Candidatus Korarchaeum</taxon>
    </lineage>
</organism>
<sequence>MSWSVLEALRKDPEILRENLRRRFLPLDMLERAIELDRKWREAVTELNSLRERRNEINRSIPRADPGEREELIRKAKEIGEEIERLEDVLEKLSQERDSILMSMPALIDDSVPIGPNEDYNKPIRFWGKPKVPRSKLDSFMEQTRGFNVEYELIDWEPLGHADELEVMLKQVDTVKAGQLAGSRFFYLFKDIVWLEQALILFALDKISRKGFIPVIPPYMMRRDYYLGVVDLNTFEDSIYKVEGEDLYLIATSEHPLVAMHAGDTFTEDELPRLYVGLSPCFRKEAGTHGKDTKGIFRVHQFTKVEQIVFSKPEESKYWHERLIENAEEIYRELEIPYRIVNIASGDLGASAAKKYDLEGWFPAQGKYRELVSCSNCVDWQSYRLRIKLDRKGRREFVHTLNSTALATTRTISAIVENHQREDGSVRIPKALRKYLEIFEQAPKEEIVPIEKILKE</sequence>
<keyword id="KW-0030">Aminoacyl-tRNA synthetase</keyword>
<keyword id="KW-0067">ATP-binding</keyword>
<keyword id="KW-0963">Cytoplasm</keyword>
<keyword id="KW-0436">Ligase</keyword>
<keyword id="KW-0547">Nucleotide-binding</keyword>
<keyword id="KW-0648">Protein biosynthesis</keyword>
<keyword id="KW-1185">Reference proteome</keyword>
<comment type="function">
    <text evidence="1">Catalyzes the attachment of serine to tRNA(Ser). Is also able to aminoacylate tRNA(Sec) with serine, to form the misacylated tRNA L-seryl-tRNA(Sec), which will be further converted into selenocysteinyl-tRNA(Sec).</text>
</comment>
<comment type="catalytic activity">
    <reaction evidence="1">
        <text>tRNA(Ser) + L-serine + ATP = L-seryl-tRNA(Ser) + AMP + diphosphate + H(+)</text>
        <dbReference type="Rhea" id="RHEA:12292"/>
        <dbReference type="Rhea" id="RHEA-COMP:9669"/>
        <dbReference type="Rhea" id="RHEA-COMP:9703"/>
        <dbReference type="ChEBI" id="CHEBI:15378"/>
        <dbReference type="ChEBI" id="CHEBI:30616"/>
        <dbReference type="ChEBI" id="CHEBI:33019"/>
        <dbReference type="ChEBI" id="CHEBI:33384"/>
        <dbReference type="ChEBI" id="CHEBI:78442"/>
        <dbReference type="ChEBI" id="CHEBI:78533"/>
        <dbReference type="ChEBI" id="CHEBI:456215"/>
        <dbReference type="EC" id="6.1.1.11"/>
    </reaction>
</comment>
<comment type="catalytic activity">
    <reaction evidence="1">
        <text>tRNA(Sec) + L-serine + ATP = L-seryl-tRNA(Sec) + AMP + diphosphate + H(+)</text>
        <dbReference type="Rhea" id="RHEA:42580"/>
        <dbReference type="Rhea" id="RHEA-COMP:9742"/>
        <dbReference type="Rhea" id="RHEA-COMP:10128"/>
        <dbReference type="ChEBI" id="CHEBI:15378"/>
        <dbReference type="ChEBI" id="CHEBI:30616"/>
        <dbReference type="ChEBI" id="CHEBI:33019"/>
        <dbReference type="ChEBI" id="CHEBI:33384"/>
        <dbReference type="ChEBI" id="CHEBI:78442"/>
        <dbReference type="ChEBI" id="CHEBI:78533"/>
        <dbReference type="ChEBI" id="CHEBI:456215"/>
        <dbReference type="EC" id="6.1.1.11"/>
    </reaction>
</comment>
<comment type="pathway">
    <text evidence="1">Aminoacyl-tRNA biosynthesis; selenocysteinyl-tRNA(Sec) biosynthesis; L-seryl-tRNA(Sec) from L-serine and tRNA(Sec): step 1/1.</text>
</comment>
<comment type="subunit">
    <text evidence="1">Homodimer. The tRNA molecule binds across the dimer.</text>
</comment>
<comment type="subcellular location">
    <subcellularLocation>
        <location evidence="1">Cytoplasm</location>
    </subcellularLocation>
</comment>
<comment type="domain">
    <text evidence="1">Consists of two distinct domains, a catalytic core and a N-terminal extension that is involved in tRNA binding.</text>
</comment>
<comment type="similarity">
    <text evidence="1">Belongs to the class-II aminoacyl-tRNA synthetase family. Type-1 seryl-tRNA synthetase subfamily.</text>
</comment>